<reference key="1">
    <citation type="journal article" date="1992" name="Protein Sci.">
        <title>Amino acid sequence of a protease inhibitor isolated from Sarcophaga bullata determined by mass spectrometry.</title>
        <authorList>
            <person name="Papayannopoulos I.A."/>
            <person name="Biemann K."/>
        </authorList>
    </citation>
    <scope>PROTEIN SEQUENCE</scope>
    <source>
        <tissue>Larval hemolymph</tissue>
    </source>
</reference>
<organism>
    <name type="scientific">Sarcophaga bullata</name>
    <name type="common">Grey flesh fly</name>
    <name type="synonym">Neobellieria bullata</name>
    <dbReference type="NCBI Taxonomy" id="7385"/>
    <lineage>
        <taxon>Eukaryota</taxon>
        <taxon>Metazoa</taxon>
        <taxon>Ecdysozoa</taxon>
        <taxon>Arthropoda</taxon>
        <taxon>Hexapoda</taxon>
        <taxon>Insecta</taxon>
        <taxon>Pterygota</taxon>
        <taxon>Neoptera</taxon>
        <taxon>Endopterygota</taxon>
        <taxon>Diptera</taxon>
        <taxon>Brachycera</taxon>
        <taxon>Muscomorpha</taxon>
        <taxon>Oestroidea</taxon>
        <taxon>Sarcophagidae</taxon>
        <taxon>Sarcophaga</taxon>
        <taxon>Neobellieria</taxon>
    </lineage>
</organism>
<evidence type="ECO:0000250" key="1"/>
<evidence type="ECO:0000255" key="2">
    <source>
        <dbReference type="PROSITE-ProRule" id="PRU00031"/>
    </source>
</evidence>
<feature type="chain" id="PRO_0000155427" description="Protease inhibitor">
    <location>
        <begin position="1"/>
        <end position="57"/>
    </location>
</feature>
<feature type="domain" description="BPTI/Kunitz inhibitor" evidence="2">
    <location>
        <begin position="6"/>
        <end position="56"/>
    </location>
</feature>
<feature type="site" description="Reactive bond for trypsin" evidence="1">
    <location>
        <begin position="16"/>
        <end position="17"/>
    </location>
</feature>
<feature type="disulfide bond" evidence="2">
    <location>
        <begin position="6"/>
        <end position="56"/>
    </location>
</feature>
<feature type="disulfide bond" evidence="2">
    <location>
        <begin position="15"/>
        <end position="39"/>
    </location>
</feature>
<feature type="disulfide bond" evidence="2">
    <location>
        <begin position="31"/>
        <end position="52"/>
    </location>
</feature>
<name>SBPI_SARBU</name>
<protein>
    <recommendedName>
        <fullName>Protease inhibitor</fullName>
    </recommendedName>
    <alternativeName>
        <fullName>SBPI</fullName>
    </alternativeName>
</protein>
<keyword id="KW-0903">Direct protein sequencing</keyword>
<keyword id="KW-1015">Disulfide bond</keyword>
<keyword id="KW-0646">Protease inhibitor</keyword>
<keyword id="KW-0722">Serine protease inhibitor</keyword>
<dbReference type="PIR" id="A37294">
    <property type="entry name" value="TIFHBP"/>
</dbReference>
<dbReference type="SMR" id="P26228"/>
<dbReference type="MEROPS" id="I02.040"/>
<dbReference type="GO" id="GO:0005615">
    <property type="term" value="C:extracellular space"/>
    <property type="evidence" value="ECO:0007669"/>
    <property type="project" value="TreeGrafter"/>
</dbReference>
<dbReference type="GO" id="GO:0004867">
    <property type="term" value="F:serine-type endopeptidase inhibitor activity"/>
    <property type="evidence" value="ECO:0007669"/>
    <property type="project" value="UniProtKB-KW"/>
</dbReference>
<dbReference type="CDD" id="cd00109">
    <property type="entry name" value="Kunitz-type"/>
    <property type="match status" value="1"/>
</dbReference>
<dbReference type="FunFam" id="4.10.410.10:FF:000004">
    <property type="entry name" value="Tissue factor pathway inhibitor"/>
    <property type="match status" value="1"/>
</dbReference>
<dbReference type="Gene3D" id="4.10.410.10">
    <property type="entry name" value="Pancreatic trypsin inhibitor Kunitz domain"/>
    <property type="match status" value="1"/>
</dbReference>
<dbReference type="InterPro" id="IPR002223">
    <property type="entry name" value="Kunitz_BPTI"/>
</dbReference>
<dbReference type="InterPro" id="IPR036880">
    <property type="entry name" value="Kunitz_BPTI_sf"/>
</dbReference>
<dbReference type="InterPro" id="IPR020901">
    <property type="entry name" value="Prtase_inh_Kunz-CS"/>
</dbReference>
<dbReference type="InterPro" id="IPR050098">
    <property type="entry name" value="TFPI/VKTCI-like"/>
</dbReference>
<dbReference type="PANTHER" id="PTHR10083">
    <property type="entry name" value="KUNITZ-TYPE PROTEASE INHIBITOR-RELATED"/>
    <property type="match status" value="1"/>
</dbReference>
<dbReference type="PANTHER" id="PTHR10083:SF328">
    <property type="entry name" value="TISSUE FACTOR PATHWAY INHIBITOR"/>
    <property type="match status" value="1"/>
</dbReference>
<dbReference type="Pfam" id="PF00014">
    <property type="entry name" value="Kunitz_BPTI"/>
    <property type="match status" value="1"/>
</dbReference>
<dbReference type="PRINTS" id="PR00759">
    <property type="entry name" value="BASICPTASE"/>
</dbReference>
<dbReference type="SMART" id="SM00131">
    <property type="entry name" value="KU"/>
    <property type="match status" value="1"/>
</dbReference>
<dbReference type="SUPFAM" id="SSF57362">
    <property type="entry name" value="BPTI-like"/>
    <property type="match status" value="1"/>
</dbReference>
<dbReference type="PROSITE" id="PS00280">
    <property type="entry name" value="BPTI_KUNITZ_1"/>
    <property type="match status" value="1"/>
</dbReference>
<dbReference type="PROSITE" id="PS50279">
    <property type="entry name" value="BPTI_KUNITZ_2"/>
    <property type="match status" value="1"/>
</dbReference>
<sequence length="57" mass="6518">VDKSACLQPKEVGPCRKSDFVFFYNADTKACEEFLYGGCRGNDNRFNTKEECEKLCL</sequence>
<proteinExistence type="evidence at protein level"/>
<accession>P26228</accession>
<comment type="function">
    <text>Seems to inhibit trypsin.</text>
</comment>